<comment type="function">
    <text>PsaA and PsaB bind P700, the primary electron donor of photosystem I (PSI), as well as the electron acceptors A0, A1 and FX. PSI is a plastocyanin/cytochrome c6-ferredoxin oxidoreductase, converting photonic excitation into a charge separation, which transfers an electron from the donor P700 chlorophyll pair to the spectroscopically characterized acceptors A0, A1, FX, FA and FB in turn. Oxidized P700 is reduced on the lumenal side of the thylakoid membrane by plastocyanin or cytochrome c6.</text>
</comment>
<comment type="catalytic activity">
    <reaction evidence="1">
        <text>reduced [plastocyanin] + hnu + oxidized [2Fe-2S]-[ferredoxin] = oxidized [plastocyanin] + reduced [2Fe-2S]-[ferredoxin]</text>
        <dbReference type="Rhea" id="RHEA:30407"/>
        <dbReference type="Rhea" id="RHEA-COMP:10000"/>
        <dbReference type="Rhea" id="RHEA-COMP:10001"/>
        <dbReference type="Rhea" id="RHEA-COMP:10039"/>
        <dbReference type="Rhea" id="RHEA-COMP:10040"/>
        <dbReference type="ChEBI" id="CHEBI:29036"/>
        <dbReference type="ChEBI" id="CHEBI:30212"/>
        <dbReference type="ChEBI" id="CHEBI:33737"/>
        <dbReference type="ChEBI" id="CHEBI:33738"/>
        <dbReference type="ChEBI" id="CHEBI:49552"/>
        <dbReference type="EC" id="1.97.1.12"/>
    </reaction>
</comment>
<comment type="cofactor">
    <text evidence="1">P700 is a chlorophyll a/chlorophyll a' dimer, A0 is one or more chlorophyll a, A1 is one or both phylloquinones and FX is a shared 4Fe-4S iron-sulfur center.</text>
</comment>
<comment type="subunit">
    <text evidence="1">The PsaA/B heterodimer binds the P700 chlorophyll special pair and subsequent electron acceptors. PSI consists of a core antenna complex that captures photons, and an electron transfer chain that converts photonic excitation into a charge separation. The eukaryotic PSI reaction center is composed of at least 11 subunits.</text>
</comment>
<comment type="subcellular location">
    <subcellularLocation>
        <location evidence="1">Plastid</location>
        <location evidence="1">Chloroplast thylakoid membrane</location>
        <topology evidence="1">Multi-pass membrane protein</topology>
    </subcellularLocation>
</comment>
<comment type="similarity">
    <text evidence="1">Belongs to the PsaA/PsaB family.</text>
</comment>
<geneLocation type="chloroplast"/>
<feature type="chain" id="PRO_0000088549" description="Photosystem I P700 chlorophyll a apoprotein A1">
    <location>
        <begin position="1"/>
        <end position="751"/>
    </location>
</feature>
<feature type="transmembrane region" description="Helical; Name=I" evidence="1">
    <location>
        <begin position="73"/>
        <end position="96"/>
    </location>
</feature>
<feature type="transmembrane region" description="Helical; Name=II" evidence="1">
    <location>
        <begin position="159"/>
        <end position="182"/>
    </location>
</feature>
<feature type="transmembrane region" description="Helical; Name=III" evidence="1">
    <location>
        <begin position="198"/>
        <end position="222"/>
    </location>
</feature>
<feature type="transmembrane region" description="Helical; Name=IV" evidence="1">
    <location>
        <begin position="294"/>
        <end position="312"/>
    </location>
</feature>
<feature type="transmembrane region" description="Helical; Name=V" evidence="1">
    <location>
        <begin position="349"/>
        <end position="372"/>
    </location>
</feature>
<feature type="transmembrane region" description="Helical; Name=VI" evidence="1">
    <location>
        <begin position="388"/>
        <end position="414"/>
    </location>
</feature>
<feature type="transmembrane region" description="Helical; Name=VII" evidence="1">
    <location>
        <begin position="436"/>
        <end position="458"/>
    </location>
</feature>
<feature type="transmembrane region" description="Helical; Name=VIII" evidence="1">
    <location>
        <begin position="533"/>
        <end position="551"/>
    </location>
</feature>
<feature type="transmembrane region" description="Helical; Name=IX" evidence="1">
    <location>
        <begin position="591"/>
        <end position="612"/>
    </location>
</feature>
<feature type="transmembrane region" description="Helical; Name=X" evidence="1">
    <location>
        <begin position="665"/>
        <end position="687"/>
    </location>
</feature>
<feature type="transmembrane region" description="Helical; Name=XI" evidence="1">
    <location>
        <begin position="725"/>
        <end position="745"/>
    </location>
</feature>
<feature type="binding site" evidence="1">
    <location>
        <position position="575"/>
    </location>
    <ligand>
        <name>[4Fe-4S] cluster</name>
        <dbReference type="ChEBI" id="CHEBI:49883"/>
        <note>ligand shared between dimeric partners</note>
    </ligand>
</feature>
<feature type="binding site" evidence="1">
    <location>
        <position position="584"/>
    </location>
    <ligand>
        <name>[4Fe-4S] cluster</name>
        <dbReference type="ChEBI" id="CHEBI:49883"/>
        <note>ligand shared between dimeric partners</note>
    </ligand>
</feature>
<feature type="binding site" description="axial binding residue" evidence="1">
    <location>
        <position position="676"/>
    </location>
    <ligand>
        <name>chlorophyll a'</name>
        <dbReference type="ChEBI" id="CHEBI:189419"/>
        <label>A1</label>
    </ligand>
    <ligandPart>
        <name>Mg</name>
        <dbReference type="ChEBI" id="CHEBI:25107"/>
    </ligandPart>
</feature>
<feature type="binding site" description="axial binding residue" evidence="1">
    <location>
        <position position="684"/>
    </location>
    <ligand>
        <name>chlorophyll a</name>
        <dbReference type="ChEBI" id="CHEBI:58416"/>
        <label>A3</label>
    </ligand>
    <ligandPart>
        <name>Mg</name>
        <dbReference type="ChEBI" id="CHEBI:25107"/>
    </ligandPart>
</feature>
<feature type="binding site" evidence="1">
    <location>
        <position position="692"/>
    </location>
    <ligand>
        <name>chlorophyll a</name>
        <dbReference type="ChEBI" id="CHEBI:58416"/>
        <label>A3</label>
    </ligand>
</feature>
<feature type="binding site" evidence="1">
    <location>
        <position position="693"/>
    </location>
    <ligand>
        <name>phylloquinone</name>
        <dbReference type="ChEBI" id="CHEBI:18067"/>
        <label>A</label>
    </ligand>
</feature>
<protein>
    <recommendedName>
        <fullName evidence="1">Photosystem I P700 chlorophyll a apoprotein A1</fullName>
        <ecNumber evidence="1">1.97.1.12</ecNumber>
    </recommendedName>
    <alternativeName>
        <fullName evidence="1">PSI-A</fullName>
    </alternativeName>
    <alternativeName>
        <fullName evidence="1">PsaA</fullName>
    </alternativeName>
</protein>
<dbReference type="EC" id="1.97.1.12" evidence="1"/>
<dbReference type="EMBL" id="X70810">
    <property type="protein sequence ID" value="CAA50093.1"/>
    <property type="molecule type" value="Genomic_DNA"/>
</dbReference>
<dbReference type="EMBL" id="Z11874">
    <property type="protein sequence ID" value="CAA77910.1"/>
    <property type="molecule type" value="Genomic_DNA"/>
</dbReference>
<dbReference type="EMBL" id="M37526">
    <property type="protein sequence ID" value="AAA84451.1"/>
    <property type="status" value="ALT_SEQ"/>
    <property type="molecule type" value="Genomic_DNA"/>
</dbReference>
<dbReference type="EMBL" id="M17309">
    <property type="protein sequence ID" value="AAA84232.1"/>
    <property type="molecule type" value="Genomic_DNA"/>
</dbReference>
<dbReference type="PIR" id="S26071">
    <property type="entry name" value="S26071"/>
</dbReference>
<dbReference type="RefSeq" id="NP_041906.1">
    <property type="nucleotide sequence ID" value="NC_001603.2"/>
</dbReference>
<dbReference type="SMR" id="P19430"/>
<dbReference type="GeneID" id="807489"/>
<dbReference type="GO" id="GO:0009535">
    <property type="term" value="C:chloroplast thylakoid membrane"/>
    <property type="evidence" value="ECO:0007669"/>
    <property type="project" value="UniProtKB-SubCell"/>
</dbReference>
<dbReference type="GO" id="GO:0009522">
    <property type="term" value="C:photosystem I"/>
    <property type="evidence" value="ECO:0007669"/>
    <property type="project" value="UniProtKB-KW"/>
</dbReference>
<dbReference type="GO" id="GO:0051539">
    <property type="term" value="F:4 iron, 4 sulfur cluster binding"/>
    <property type="evidence" value="ECO:0007669"/>
    <property type="project" value="UniProtKB-KW"/>
</dbReference>
<dbReference type="GO" id="GO:0016168">
    <property type="term" value="F:chlorophyll binding"/>
    <property type="evidence" value="ECO:0007669"/>
    <property type="project" value="UniProtKB-KW"/>
</dbReference>
<dbReference type="GO" id="GO:0009055">
    <property type="term" value="F:electron transfer activity"/>
    <property type="evidence" value="ECO:0007669"/>
    <property type="project" value="UniProtKB-UniRule"/>
</dbReference>
<dbReference type="GO" id="GO:0000287">
    <property type="term" value="F:magnesium ion binding"/>
    <property type="evidence" value="ECO:0007669"/>
    <property type="project" value="UniProtKB-UniRule"/>
</dbReference>
<dbReference type="GO" id="GO:0016491">
    <property type="term" value="F:oxidoreductase activity"/>
    <property type="evidence" value="ECO:0007669"/>
    <property type="project" value="UniProtKB-KW"/>
</dbReference>
<dbReference type="GO" id="GO:0015979">
    <property type="term" value="P:photosynthesis"/>
    <property type="evidence" value="ECO:0007669"/>
    <property type="project" value="UniProtKB-UniRule"/>
</dbReference>
<dbReference type="Gene3D" id="1.20.1130.10">
    <property type="entry name" value="Photosystem I PsaA/PsaB"/>
    <property type="match status" value="1"/>
</dbReference>
<dbReference type="HAMAP" id="MF_00458">
    <property type="entry name" value="PSI_PsaA"/>
    <property type="match status" value="1"/>
</dbReference>
<dbReference type="InterPro" id="IPR006243">
    <property type="entry name" value="PSI_PsaA"/>
</dbReference>
<dbReference type="InterPro" id="IPR001280">
    <property type="entry name" value="PSI_PsaA/B"/>
</dbReference>
<dbReference type="InterPro" id="IPR020586">
    <property type="entry name" value="PSI_PsaA/B_CS"/>
</dbReference>
<dbReference type="InterPro" id="IPR036408">
    <property type="entry name" value="PSI_PsaA/B_sf"/>
</dbReference>
<dbReference type="NCBIfam" id="TIGR01335">
    <property type="entry name" value="psaA"/>
    <property type="match status" value="1"/>
</dbReference>
<dbReference type="PANTHER" id="PTHR30128">
    <property type="entry name" value="OUTER MEMBRANE PROTEIN, OMPA-RELATED"/>
    <property type="match status" value="1"/>
</dbReference>
<dbReference type="PANTHER" id="PTHR30128:SF19">
    <property type="entry name" value="PHOTOSYSTEM I P700 CHLOROPHYLL A APOPROTEIN A1-RELATED"/>
    <property type="match status" value="1"/>
</dbReference>
<dbReference type="Pfam" id="PF00223">
    <property type="entry name" value="PsaA_PsaB"/>
    <property type="match status" value="1"/>
</dbReference>
<dbReference type="PIRSF" id="PIRSF002905">
    <property type="entry name" value="PSI_A"/>
    <property type="match status" value="1"/>
</dbReference>
<dbReference type="PRINTS" id="PR00257">
    <property type="entry name" value="PHOTSYSPSAAB"/>
</dbReference>
<dbReference type="SUPFAM" id="SSF81558">
    <property type="entry name" value="Photosystem I subunits PsaA/PsaB"/>
    <property type="match status" value="1"/>
</dbReference>
<dbReference type="PROSITE" id="PS00419">
    <property type="entry name" value="PHOTOSYSTEM_I_PSAAB"/>
    <property type="match status" value="1"/>
</dbReference>
<name>PSAA_EUGGR</name>
<keyword id="KW-0004">4Fe-4S</keyword>
<keyword id="KW-0148">Chlorophyll</keyword>
<keyword id="KW-0150">Chloroplast</keyword>
<keyword id="KW-0157">Chromophore</keyword>
<keyword id="KW-0249">Electron transport</keyword>
<keyword id="KW-0408">Iron</keyword>
<keyword id="KW-0411">Iron-sulfur</keyword>
<keyword id="KW-0460">Magnesium</keyword>
<keyword id="KW-0472">Membrane</keyword>
<keyword id="KW-0479">Metal-binding</keyword>
<keyword id="KW-0560">Oxidoreductase</keyword>
<keyword id="KW-0602">Photosynthesis</keyword>
<keyword id="KW-0603">Photosystem I</keyword>
<keyword id="KW-0934">Plastid</keyword>
<keyword id="KW-0793">Thylakoid</keyword>
<keyword id="KW-0812">Transmembrane</keyword>
<keyword id="KW-1133">Transmembrane helix</keyword>
<keyword id="KW-0813">Transport</keyword>
<sequence length="751" mass="83989">MTITPPEQQVKRVRVAFVSNPVETSFEKWSRPGHFSRLLSKGPNTTTWIWNLHADAHDFDNHTTDLEDISRKVFSAHFGQLAIIEIWLSGMFFHGARFSNYEAWLLDPIHVKPSAQIVWPIVGQEILNGDVGGNFQGIQITSGLFQLWRSCGITSEFQLYITALTGLIFSAVLFFAGWFHYHKAAPKLEWFQNVESMLNHHLSGLLGLGCLSWAGHQIHVSLPINKLLDSGVNPAELPLPHDFILDKSLISQLYPSFSKGLAPFFTFHWSEYSDFLTFRGGLNNVTGGLWLTDVAHHHLALAVLFILAGHMYKTNWKIGHDIKGLLESHTGPFTGQGHKGLYEIFTNSWHAQLSLNLAMMGSLSIIVAQHMYSMPPYPYIAIDYGTELSLFTHHYWIGGFCIVGAAAHAAIFMVRDYDPALNFNNLLDRVLLHRDAIISHLNWVCIFLGLHSFGLYIHNDTLSALGRPQDMFSDSAIQLQPVFAQWIQNTHYLAPTLTAFNLVSPTTPVWGGDVVSISGKVAMMPIKLGTADFLVHHIHAFTIHVTVLILLKGVLFSRSSRLIPDKASLGFRFPCDGPGRGGTCQVSAWDHVFLGLFWMYNSISVAIFHFSWKMQSDVWGTVLANKVSHITGGNFSQGSLTINGWLRDFLWAQSSQVIQSYGSPLSAYGLMFLGAHFVWAFTLMFLFSGRGYWQELIESIVWAHNKLKVAPNIQPRALSITQGRAVGVAHYLLGGIATTWSFFLARIISVG</sequence>
<reference key="1">
    <citation type="journal article" date="1988" name="Curr. Genet.">
        <title>The two genes for the P700 chlorophyll a apoproteins on the Euglena gracilis chloroplast genome contain multiple introns.</title>
        <authorList>
            <person name="Cushman J.C."/>
            <person name="Hallick R.B."/>
            <person name="Price C.A."/>
        </authorList>
    </citation>
    <scope>NUCLEOTIDE SEQUENCE [GENOMIC DNA]</scope>
    <source>
        <strain>Z / UTEX 753</strain>
    </source>
</reference>
<reference key="2">
    <citation type="journal article" date="1993" name="Nucleic Acids Res.">
        <title>Complete sequence of Euglena gracilis chloroplast DNA.</title>
        <authorList>
            <person name="Hallick R.B."/>
            <person name="Hong L."/>
            <person name="Drager R.G."/>
            <person name="Favreau M.R."/>
            <person name="Monfort A."/>
            <person name="Orsat B."/>
            <person name="Spielmann A."/>
            <person name="Stutz E."/>
        </authorList>
    </citation>
    <scope>NUCLEOTIDE SEQUENCE [LARGE SCALE GENOMIC DNA]</scope>
    <source>
        <strain>Z / UTEX 753</strain>
    </source>
</reference>
<reference key="3">
    <citation type="journal article" date="1987" name="Plant Mol. Biol.">
        <title>Characterization of the trnD, trnK, psaA locus of Euglena gracilis chloroplast DNA.</title>
        <authorList>
            <person name="Manzara T."/>
            <person name="Hu J.X."/>
            <person name="Price C.A."/>
            <person name="Hallick R.B."/>
        </authorList>
        <dbReference type="AGRICOLA" id="IND91035309"/>
    </citation>
    <scope>NUCLEOTIDE SEQUENCE [GENOMIC DNA] OF 1-398</scope>
</reference>
<organism>
    <name type="scientific">Euglena gracilis</name>
    <dbReference type="NCBI Taxonomy" id="3039"/>
    <lineage>
        <taxon>Eukaryota</taxon>
        <taxon>Discoba</taxon>
        <taxon>Euglenozoa</taxon>
        <taxon>Euglenida</taxon>
        <taxon>Spirocuta</taxon>
        <taxon>Euglenophyceae</taxon>
        <taxon>Euglenales</taxon>
        <taxon>Euglenaceae</taxon>
        <taxon>Euglena</taxon>
    </lineage>
</organism>
<evidence type="ECO:0000255" key="1">
    <source>
        <dbReference type="HAMAP-Rule" id="MF_00458"/>
    </source>
</evidence>
<gene>
    <name evidence="1" type="primary">psaA</name>
</gene>
<proteinExistence type="inferred from homology"/>
<accession>P19430</accession>